<dbReference type="EMBL" id="PP505398">
    <property type="protein sequence ID" value="WYC13327.1"/>
    <property type="molecule type" value="Genomic_DNA"/>
</dbReference>
<dbReference type="SMR" id="P9WEI1"/>
<dbReference type="GO" id="GO:0005507">
    <property type="term" value="F:copper ion binding"/>
    <property type="evidence" value="ECO:0007669"/>
    <property type="project" value="InterPro"/>
</dbReference>
<dbReference type="GO" id="GO:0016491">
    <property type="term" value="F:oxidoreductase activity"/>
    <property type="evidence" value="ECO:0007669"/>
    <property type="project" value="InterPro"/>
</dbReference>
<dbReference type="FunFam" id="2.60.40.420:FF:000045">
    <property type="entry name" value="Laccase 2"/>
    <property type="match status" value="1"/>
</dbReference>
<dbReference type="Gene3D" id="2.60.40.420">
    <property type="entry name" value="Cupredoxins - blue copper proteins"/>
    <property type="match status" value="2"/>
</dbReference>
<dbReference type="InterPro" id="IPR001117">
    <property type="entry name" value="Cu-oxidase_2nd"/>
</dbReference>
<dbReference type="InterPro" id="IPR011706">
    <property type="entry name" value="Cu-oxidase_C"/>
</dbReference>
<dbReference type="InterPro" id="IPR045087">
    <property type="entry name" value="Cu-oxidase_fam"/>
</dbReference>
<dbReference type="InterPro" id="IPR008972">
    <property type="entry name" value="Cupredoxin"/>
</dbReference>
<dbReference type="PANTHER" id="PTHR11709:SF511">
    <property type="entry name" value="LACCASE"/>
    <property type="match status" value="1"/>
</dbReference>
<dbReference type="PANTHER" id="PTHR11709">
    <property type="entry name" value="MULTI-COPPER OXIDASE"/>
    <property type="match status" value="1"/>
</dbReference>
<dbReference type="Pfam" id="PF00394">
    <property type="entry name" value="Cu-oxidase"/>
    <property type="match status" value="1"/>
</dbReference>
<dbReference type="Pfam" id="PF07731">
    <property type="entry name" value="Cu-oxidase_2"/>
    <property type="match status" value="1"/>
</dbReference>
<dbReference type="SUPFAM" id="SSF49503">
    <property type="entry name" value="Cupredoxins"/>
    <property type="match status" value="2"/>
</dbReference>
<reference key="1">
    <citation type="journal article" date="2024" name="J. Am. Chem. Soc.">
        <title>Two cytochrome P450 enzymes form the tricyclic nested skeleton of meroterpenoids by sequential oxidative reactions.</title>
        <authorList>
            <person name="Yang E."/>
            <person name="Yao Y."/>
            <person name="Su H."/>
            <person name="Sun Z."/>
            <person name="Gao S.S."/>
            <person name="Sureram S."/>
            <person name="Kittakoop P."/>
            <person name="Fan K."/>
            <person name="Pan Y."/>
            <person name="Xu X."/>
            <person name="Sun Z.H."/>
            <person name="Ma G."/>
            <person name="Liu G."/>
        </authorList>
    </citation>
    <scope>NUCLEOTIDE SEQUENCE [GENOMIC DNA]</scope>
    <scope>FUNCTION</scope>
    <scope>PATHWAY</scope>
</reference>
<comment type="function">
    <text evidence="1">Laccase-like protein; part of the gene cluster that mediates the biosynthesis of clavilactone A, a meroterpenoid that features a unique benzo-fused ten-membered carbocyclic ring unit with an alpha,beta-epoxy-gamma-lactone moiety, forming an intriguing 10/5/3 tricyclic nested skeleton (PubMed:38602511). ClaR, ClaS and ClaT are sufficient to produce clavilactone A and the function of claX, if any, has still to be identified (PubMed:38602511). The biosynthesis begins with the prenyltransferase claS that transfers geranyl pyrophosphate (GPP) to hydroquinone to produces geranylhydroquinon. The cytochrome P450 monooxygenase claR then catalyzes the diradical coupling reaction between the intramolecular hydroquinone and allyl moieties to form the benzo-fused ten-membered carbocyclic ring unit of wigantol. Finally the cytochrome P450 monooxygenase claT exquisitely and stereoselectively assembles the alpha,beta-epoxy-gamma-lactone moiety, producing clavilactone A via arnebinol A (PubMed:38602511).</text>
</comment>
<comment type="similarity">
    <text evidence="3">Belongs to the multicopper oxidase family.</text>
</comment>
<comment type="caution">
    <text evidence="3">Although the protein is related to laccases, none of the cupper-binding sites are conserved. As the protein is not involved in biosynthesis claX might be the product of a pseudogene.</text>
</comment>
<feature type="chain" id="PRO_0000461440" description="Laccase-like protein claX">
    <location>
        <begin position="1"/>
        <end position="417"/>
    </location>
</feature>
<gene>
    <name evidence="2" type="primary">claX</name>
</gene>
<protein>
    <recommendedName>
        <fullName evidence="2">Laccase-like protein claX</fullName>
    </recommendedName>
    <alternativeName>
        <fullName evidence="2">Clavilactone A biosynthesis cluster protein X</fullName>
    </alternativeName>
</protein>
<evidence type="ECO:0000269" key="1">
    <source>
    </source>
</evidence>
<evidence type="ECO:0000303" key="2">
    <source>
    </source>
</evidence>
<evidence type="ECO:0000305" key="3"/>
<organism>
    <name type="scientific">Ampulloclitocybe clavipes</name>
    <name type="common">Club foot</name>
    <name type="synonym">Clitocybe clavipes</name>
    <dbReference type="NCBI Taxonomy" id="56467"/>
    <lineage>
        <taxon>Eukaryota</taxon>
        <taxon>Fungi</taxon>
        <taxon>Dikarya</taxon>
        <taxon>Basidiomycota</taxon>
        <taxon>Agaricomycotina</taxon>
        <taxon>Agaricomycetes</taxon>
        <taxon>Agaricomycetidae</taxon>
        <taxon>Agaricales</taxon>
        <taxon>Hygrophoraceae</taxon>
        <taxon>Ampulloclitocybe</taxon>
    </lineage>
</organism>
<proteinExistence type="inferred from homology"/>
<sequence>MITLTIFSPTDFQGLRGPLIIYDPEDPQKHLYDVDDESTIFQVGDSWHNSTVPLLAGYVATGIVPVSDSGTVDGAGRFQGGPAVPFAVTNVVKGQRYRLRIINQSARNVFTISIDKHFLTIIEADGVATQPLLVNEIEMLAGQRYSAIVSTPPQLSGSLALELINMAHSFTQTRPLINNAPFVSGDPSRNLNQNATLSRGILRYAGGRREDPRTPMTLGPDPTNPLAFVEANLKPLVNNPPGIPDVNITLNLVVTTGAAQWNVNNVSYLPPVVPTLVKILAGADEPANFNVTENTFLLPVNATIQITFPPMLMTKLTPSTYTEYVTIFLILLHPIDAFPKNNFWVVKSNSSDSDVINTIDPIKRDVTAVGAEGTIVRFTTDNIVMASGTDEVRTDVEPDAAWEGLCPAYDALPSALQ</sequence>
<accession>P9WEI1</accession>
<name>CLAX_AMPCV</name>